<evidence type="ECO:0000255" key="1">
    <source>
        <dbReference type="HAMAP-Rule" id="MF_00101"/>
    </source>
</evidence>
<sequence>MIIGIGTDLCNIDRITTILGKKESGRFIKRLFSCEEIEASSAFSMTKAAFFAKRFAAKEAFVKALGTGFRHSISFQDISISNDSLGAPKVNISGKAALLLEEKKPPRHTLSIHLSLSDDHPWALAFVVIEACPE</sequence>
<name>ACPS_ZYMMO</name>
<comment type="function">
    <text evidence="1">Transfers the 4'-phosphopantetheine moiety from coenzyme A to a Ser of acyl-carrier-protein.</text>
</comment>
<comment type="catalytic activity">
    <reaction evidence="1">
        <text>apo-[ACP] + CoA = holo-[ACP] + adenosine 3',5'-bisphosphate + H(+)</text>
        <dbReference type="Rhea" id="RHEA:12068"/>
        <dbReference type="Rhea" id="RHEA-COMP:9685"/>
        <dbReference type="Rhea" id="RHEA-COMP:9690"/>
        <dbReference type="ChEBI" id="CHEBI:15378"/>
        <dbReference type="ChEBI" id="CHEBI:29999"/>
        <dbReference type="ChEBI" id="CHEBI:57287"/>
        <dbReference type="ChEBI" id="CHEBI:58343"/>
        <dbReference type="ChEBI" id="CHEBI:64479"/>
        <dbReference type="EC" id="2.7.8.7"/>
    </reaction>
</comment>
<comment type="cofactor">
    <cofactor evidence="1">
        <name>Mg(2+)</name>
        <dbReference type="ChEBI" id="CHEBI:18420"/>
    </cofactor>
</comment>
<comment type="subcellular location">
    <subcellularLocation>
        <location evidence="1">Cytoplasm</location>
    </subcellularLocation>
</comment>
<comment type="similarity">
    <text evidence="1">Belongs to the P-Pant transferase superfamily. AcpS family.</text>
</comment>
<protein>
    <recommendedName>
        <fullName evidence="1">Holo-[acyl-carrier-protein] synthase</fullName>
        <shortName evidence="1">Holo-ACP synthase</shortName>
        <ecNumber evidence="1">2.7.8.7</ecNumber>
    </recommendedName>
    <alternativeName>
        <fullName evidence="1">4'-phosphopantetheinyl transferase AcpS</fullName>
    </alternativeName>
</protein>
<gene>
    <name evidence="1" type="primary">acpS</name>
    <name type="ordered locus">ZMO1709</name>
</gene>
<organism>
    <name type="scientific">Zymomonas mobilis subsp. mobilis (strain ATCC 31821 / ZM4 / CP4)</name>
    <dbReference type="NCBI Taxonomy" id="264203"/>
    <lineage>
        <taxon>Bacteria</taxon>
        <taxon>Pseudomonadati</taxon>
        <taxon>Pseudomonadota</taxon>
        <taxon>Alphaproteobacteria</taxon>
        <taxon>Sphingomonadales</taxon>
        <taxon>Zymomonadaceae</taxon>
        <taxon>Zymomonas</taxon>
    </lineage>
</organism>
<proteinExistence type="inferred from homology"/>
<dbReference type="EC" id="2.7.8.7" evidence="1"/>
<dbReference type="EMBL" id="AE008692">
    <property type="protein sequence ID" value="AAV90333.1"/>
    <property type="molecule type" value="Genomic_DNA"/>
</dbReference>
<dbReference type="RefSeq" id="WP_011241456.1">
    <property type="nucleotide sequence ID" value="NZ_CP035711.1"/>
</dbReference>
<dbReference type="SMR" id="Q5NLS7"/>
<dbReference type="STRING" id="264203.ZMO1709"/>
<dbReference type="GeneID" id="79904964"/>
<dbReference type="KEGG" id="zmo:ZMO1709"/>
<dbReference type="eggNOG" id="COG0736">
    <property type="taxonomic scope" value="Bacteria"/>
</dbReference>
<dbReference type="HOGENOM" id="CLU_089696_0_2_5"/>
<dbReference type="Proteomes" id="UP000001173">
    <property type="component" value="Chromosome"/>
</dbReference>
<dbReference type="GO" id="GO:0005737">
    <property type="term" value="C:cytoplasm"/>
    <property type="evidence" value="ECO:0007669"/>
    <property type="project" value="UniProtKB-SubCell"/>
</dbReference>
<dbReference type="GO" id="GO:0008897">
    <property type="term" value="F:holo-[acyl-carrier-protein] synthase activity"/>
    <property type="evidence" value="ECO:0007669"/>
    <property type="project" value="UniProtKB-UniRule"/>
</dbReference>
<dbReference type="GO" id="GO:0000287">
    <property type="term" value="F:magnesium ion binding"/>
    <property type="evidence" value="ECO:0007669"/>
    <property type="project" value="UniProtKB-UniRule"/>
</dbReference>
<dbReference type="GO" id="GO:0006633">
    <property type="term" value="P:fatty acid biosynthetic process"/>
    <property type="evidence" value="ECO:0007669"/>
    <property type="project" value="UniProtKB-UniRule"/>
</dbReference>
<dbReference type="Gene3D" id="3.90.470.20">
    <property type="entry name" value="4'-phosphopantetheinyl transferase domain"/>
    <property type="match status" value="1"/>
</dbReference>
<dbReference type="HAMAP" id="MF_00101">
    <property type="entry name" value="AcpS"/>
    <property type="match status" value="1"/>
</dbReference>
<dbReference type="InterPro" id="IPR008278">
    <property type="entry name" value="4-PPantetheinyl_Trfase_dom"/>
</dbReference>
<dbReference type="InterPro" id="IPR037143">
    <property type="entry name" value="4-PPantetheinyl_Trfase_dom_sf"/>
</dbReference>
<dbReference type="InterPro" id="IPR002582">
    <property type="entry name" value="ACPS"/>
</dbReference>
<dbReference type="InterPro" id="IPR004568">
    <property type="entry name" value="Ppantetheine-prot_Trfase_dom"/>
</dbReference>
<dbReference type="NCBIfam" id="TIGR00516">
    <property type="entry name" value="acpS"/>
    <property type="match status" value="1"/>
</dbReference>
<dbReference type="NCBIfam" id="TIGR00556">
    <property type="entry name" value="pantethn_trn"/>
    <property type="match status" value="1"/>
</dbReference>
<dbReference type="Pfam" id="PF01648">
    <property type="entry name" value="ACPS"/>
    <property type="match status" value="1"/>
</dbReference>
<dbReference type="SUPFAM" id="SSF56214">
    <property type="entry name" value="4'-phosphopantetheinyl transferase"/>
    <property type="match status" value="1"/>
</dbReference>
<keyword id="KW-0963">Cytoplasm</keyword>
<keyword id="KW-0275">Fatty acid biosynthesis</keyword>
<keyword id="KW-0276">Fatty acid metabolism</keyword>
<keyword id="KW-0444">Lipid biosynthesis</keyword>
<keyword id="KW-0443">Lipid metabolism</keyword>
<keyword id="KW-0460">Magnesium</keyword>
<keyword id="KW-0479">Metal-binding</keyword>
<keyword id="KW-1185">Reference proteome</keyword>
<keyword id="KW-0808">Transferase</keyword>
<feature type="chain" id="PRO_0000175735" description="Holo-[acyl-carrier-protein] synthase">
    <location>
        <begin position="1"/>
        <end position="134"/>
    </location>
</feature>
<feature type="binding site" evidence="1">
    <location>
        <position position="8"/>
    </location>
    <ligand>
        <name>Mg(2+)</name>
        <dbReference type="ChEBI" id="CHEBI:18420"/>
    </ligand>
</feature>
<feature type="binding site" evidence="1">
    <location>
        <position position="59"/>
    </location>
    <ligand>
        <name>Mg(2+)</name>
        <dbReference type="ChEBI" id="CHEBI:18420"/>
    </ligand>
</feature>
<reference key="1">
    <citation type="journal article" date="2005" name="Nat. Biotechnol.">
        <title>The genome sequence of the ethanologenic bacterium Zymomonas mobilis ZM4.</title>
        <authorList>
            <person name="Seo J.-S."/>
            <person name="Chong H."/>
            <person name="Park H.S."/>
            <person name="Yoon K.-O."/>
            <person name="Jung C."/>
            <person name="Kim J.J."/>
            <person name="Hong J.H."/>
            <person name="Kim H."/>
            <person name="Kim J.-H."/>
            <person name="Kil J.-I."/>
            <person name="Park C.J."/>
            <person name="Oh H.-M."/>
            <person name="Lee J.-S."/>
            <person name="Jin S.-J."/>
            <person name="Um H.-W."/>
            <person name="Lee H.-J."/>
            <person name="Oh S.-J."/>
            <person name="Kim J.Y."/>
            <person name="Kang H.L."/>
            <person name="Lee S.Y."/>
            <person name="Lee K.J."/>
            <person name="Kang H.S."/>
        </authorList>
    </citation>
    <scope>NUCLEOTIDE SEQUENCE [LARGE SCALE GENOMIC DNA]</scope>
    <source>
        <strain>ATCC 31821 / ZM4 / CP4</strain>
    </source>
</reference>
<accession>Q5NLS7</accession>